<reference key="1">
    <citation type="journal article" date="2011" name="PLoS ONE">
        <title>The genome of Akkermansia muciniphila, a dedicated intestinal mucin degrader, and its use in exploring intestinal metagenomes.</title>
        <authorList>
            <person name="van Passel M.W."/>
            <person name="Kant R."/>
            <person name="Zoetendal E.G."/>
            <person name="Plugge C.M."/>
            <person name="Derrien M."/>
            <person name="Malfatti S.A."/>
            <person name="Chain P.S."/>
            <person name="Woyke T."/>
            <person name="Palva A."/>
            <person name="de Vos W.M."/>
            <person name="Smidt H."/>
        </authorList>
    </citation>
    <scope>NUCLEOTIDE SEQUENCE [LARGE SCALE GENOMIC DNA]</scope>
    <source>
        <strain>ATCC BAA-835 / DSM 22959 / JCM 33894 / BCRC 81048 / CCUG 64013 / CIP 107961 / Muc</strain>
    </source>
</reference>
<organism>
    <name type="scientific">Akkermansia muciniphila (strain ATCC BAA-835 / DSM 22959 / JCM 33894 / BCRC 81048 / CCUG 64013 / CIP 107961 / Muc)</name>
    <dbReference type="NCBI Taxonomy" id="349741"/>
    <lineage>
        <taxon>Bacteria</taxon>
        <taxon>Pseudomonadati</taxon>
        <taxon>Verrucomicrobiota</taxon>
        <taxon>Verrucomicrobiia</taxon>
        <taxon>Verrucomicrobiales</taxon>
        <taxon>Akkermansiaceae</taxon>
        <taxon>Akkermansia</taxon>
    </lineage>
</organism>
<name>RF1_AKKM8</name>
<proteinExistence type="inferred from homology"/>
<protein>
    <recommendedName>
        <fullName evidence="1">Peptide chain release factor 1</fullName>
        <shortName evidence="1">RF-1</shortName>
    </recommendedName>
</protein>
<comment type="function">
    <text evidence="1">Peptide chain release factor 1 directs the termination of translation in response to the peptide chain termination codons UAG and UAA.</text>
</comment>
<comment type="subcellular location">
    <subcellularLocation>
        <location evidence="1">Cytoplasm</location>
    </subcellularLocation>
</comment>
<comment type="PTM">
    <text evidence="1">Methylated by PrmC. Methylation increases the termination efficiency of RF1.</text>
</comment>
<comment type="similarity">
    <text evidence="1">Belongs to the prokaryotic/mitochondrial release factor family.</text>
</comment>
<feature type="chain" id="PRO_1000093417" description="Peptide chain release factor 1">
    <location>
        <begin position="1"/>
        <end position="358"/>
    </location>
</feature>
<feature type="modified residue" description="N5-methylglutamine" evidence="1">
    <location>
        <position position="234"/>
    </location>
</feature>
<gene>
    <name evidence="1" type="primary">prfA</name>
    <name type="ordered locus">Amuc_0041</name>
</gene>
<evidence type="ECO:0000255" key="1">
    <source>
        <dbReference type="HAMAP-Rule" id="MF_00093"/>
    </source>
</evidence>
<sequence length="358" mass="40973">MDYTPLIEKRRQRLEELETVIAEPDFFNDQKKASEIMREHRRLKELMETWDSLNATEQQLADNQELAKTDDPELAELAALEIPELEAALEKLRSDVQYSLLPRDTTEDRDAIIEIRAGTGGDEASLFAGDLLRMYQRFAEERGWRFEHLESSPSDVGGFKEVVCRIAGEEVFRFLKYEGGVHRVQRVPATETQGRIHTSTATVAVMPEAEEVDIEIRPEDLRIEVCRSGGAGGQHVNKTESAVQIWHIPTGVYVRCEEERSQMKNREKGMKILRAKLFEAKKREEAEKYSAARRNLIGSGGREEKIRTYNFPQNRLTDHRIGYTSHNLDGILMGQLEDLIMALQHAEMQERLAEAGMS</sequence>
<keyword id="KW-0963">Cytoplasm</keyword>
<keyword id="KW-0488">Methylation</keyword>
<keyword id="KW-0648">Protein biosynthesis</keyword>
<keyword id="KW-1185">Reference proteome</keyword>
<dbReference type="EMBL" id="CP001071">
    <property type="protein sequence ID" value="ACD03888.1"/>
    <property type="molecule type" value="Genomic_DNA"/>
</dbReference>
<dbReference type="RefSeq" id="WP_012419103.1">
    <property type="nucleotide sequence ID" value="NZ_CP071807.1"/>
</dbReference>
<dbReference type="SMR" id="B2UL99"/>
<dbReference type="STRING" id="349741.Amuc_0041"/>
<dbReference type="PaxDb" id="349741-Amuc_0041"/>
<dbReference type="GeneID" id="60879460"/>
<dbReference type="KEGG" id="amu:Amuc_0041"/>
<dbReference type="eggNOG" id="COG0216">
    <property type="taxonomic scope" value="Bacteria"/>
</dbReference>
<dbReference type="HOGENOM" id="CLU_036856_0_1_0"/>
<dbReference type="OrthoDB" id="9806673at2"/>
<dbReference type="BioCyc" id="AMUC349741:G1GBX-48-MONOMER"/>
<dbReference type="Proteomes" id="UP000001031">
    <property type="component" value="Chromosome"/>
</dbReference>
<dbReference type="GO" id="GO:0005737">
    <property type="term" value="C:cytoplasm"/>
    <property type="evidence" value="ECO:0007669"/>
    <property type="project" value="UniProtKB-SubCell"/>
</dbReference>
<dbReference type="GO" id="GO:0016149">
    <property type="term" value="F:translation release factor activity, codon specific"/>
    <property type="evidence" value="ECO:0007669"/>
    <property type="project" value="UniProtKB-UniRule"/>
</dbReference>
<dbReference type="FunFam" id="3.30.160.20:FF:000004">
    <property type="entry name" value="Peptide chain release factor 1"/>
    <property type="match status" value="1"/>
</dbReference>
<dbReference type="FunFam" id="3.30.70.1660:FF:000002">
    <property type="entry name" value="Peptide chain release factor 1"/>
    <property type="match status" value="1"/>
</dbReference>
<dbReference type="Gene3D" id="3.30.160.20">
    <property type="match status" value="1"/>
</dbReference>
<dbReference type="Gene3D" id="3.30.70.1660">
    <property type="match status" value="1"/>
</dbReference>
<dbReference type="Gene3D" id="6.10.140.1950">
    <property type="match status" value="1"/>
</dbReference>
<dbReference type="HAMAP" id="MF_00093">
    <property type="entry name" value="Rel_fac_1"/>
    <property type="match status" value="1"/>
</dbReference>
<dbReference type="InterPro" id="IPR005139">
    <property type="entry name" value="PCRF"/>
</dbReference>
<dbReference type="InterPro" id="IPR000352">
    <property type="entry name" value="Pep_chain_release_fac_I"/>
</dbReference>
<dbReference type="InterPro" id="IPR045853">
    <property type="entry name" value="Pep_chain_release_fac_I_sf"/>
</dbReference>
<dbReference type="InterPro" id="IPR050057">
    <property type="entry name" value="Prokaryotic/Mito_RF"/>
</dbReference>
<dbReference type="InterPro" id="IPR004373">
    <property type="entry name" value="RF-1"/>
</dbReference>
<dbReference type="NCBIfam" id="TIGR00019">
    <property type="entry name" value="prfA"/>
    <property type="match status" value="1"/>
</dbReference>
<dbReference type="NCBIfam" id="NF001859">
    <property type="entry name" value="PRK00591.1"/>
    <property type="match status" value="1"/>
</dbReference>
<dbReference type="PANTHER" id="PTHR43804">
    <property type="entry name" value="LD18447P"/>
    <property type="match status" value="1"/>
</dbReference>
<dbReference type="PANTHER" id="PTHR43804:SF7">
    <property type="entry name" value="LD18447P"/>
    <property type="match status" value="1"/>
</dbReference>
<dbReference type="Pfam" id="PF03462">
    <property type="entry name" value="PCRF"/>
    <property type="match status" value="1"/>
</dbReference>
<dbReference type="Pfam" id="PF00472">
    <property type="entry name" value="RF-1"/>
    <property type="match status" value="1"/>
</dbReference>
<dbReference type="SMART" id="SM00937">
    <property type="entry name" value="PCRF"/>
    <property type="match status" value="1"/>
</dbReference>
<dbReference type="SUPFAM" id="SSF75620">
    <property type="entry name" value="Release factor"/>
    <property type="match status" value="1"/>
</dbReference>
<dbReference type="PROSITE" id="PS00745">
    <property type="entry name" value="RF_PROK_I"/>
    <property type="match status" value="1"/>
</dbReference>
<accession>B2UL99</accession>